<keyword id="KW-0004">4Fe-4S</keyword>
<keyword id="KW-0963">Cytoplasm</keyword>
<keyword id="KW-0408">Iron</keyword>
<keyword id="KW-0411">Iron-sulfur</keyword>
<keyword id="KW-0479">Metal-binding</keyword>
<keyword id="KW-1185">Reference proteome</keyword>
<keyword id="KW-0949">S-adenosyl-L-methionine</keyword>
<keyword id="KW-0808">Transferase</keyword>
<feature type="chain" id="PRO_0000325251" description="Lipoyl synthase">
    <location>
        <begin position="1"/>
        <end position="327"/>
    </location>
</feature>
<feature type="domain" description="Radical SAM core" evidence="2">
    <location>
        <begin position="83"/>
        <end position="302"/>
    </location>
</feature>
<feature type="binding site" evidence="1">
    <location>
        <position position="72"/>
    </location>
    <ligand>
        <name>[4Fe-4S] cluster</name>
        <dbReference type="ChEBI" id="CHEBI:49883"/>
        <label>1</label>
    </ligand>
</feature>
<feature type="binding site" evidence="1">
    <location>
        <position position="77"/>
    </location>
    <ligand>
        <name>[4Fe-4S] cluster</name>
        <dbReference type="ChEBI" id="CHEBI:49883"/>
        <label>1</label>
    </ligand>
</feature>
<feature type="binding site" evidence="1">
    <location>
        <position position="83"/>
    </location>
    <ligand>
        <name>[4Fe-4S] cluster</name>
        <dbReference type="ChEBI" id="CHEBI:49883"/>
        <label>1</label>
    </ligand>
</feature>
<feature type="binding site" evidence="1">
    <location>
        <position position="98"/>
    </location>
    <ligand>
        <name>[4Fe-4S] cluster</name>
        <dbReference type="ChEBI" id="CHEBI:49883"/>
        <label>2</label>
        <note>4Fe-4S-S-AdoMet</note>
    </ligand>
</feature>
<feature type="binding site" evidence="1">
    <location>
        <position position="102"/>
    </location>
    <ligand>
        <name>[4Fe-4S] cluster</name>
        <dbReference type="ChEBI" id="CHEBI:49883"/>
        <label>2</label>
        <note>4Fe-4S-S-AdoMet</note>
    </ligand>
</feature>
<feature type="binding site" evidence="1">
    <location>
        <position position="105"/>
    </location>
    <ligand>
        <name>[4Fe-4S] cluster</name>
        <dbReference type="ChEBI" id="CHEBI:49883"/>
        <label>2</label>
        <note>4Fe-4S-S-AdoMet</note>
    </ligand>
</feature>
<feature type="binding site" evidence="1">
    <location>
        <position position="313"/>
    </location>
    <ligand>
        <name>[4Fe-4S] cluster</name>
        <dbReference type="ChEBI" id="CHEBI:49883"/>
        <label>1</label>
    </ligand>
</feature>
<protein>
    <recommendedName>
        <fullName evidence="1">Lipoyl synthase</fullName>
        <ecNumber evidence="1">2.8.1.8</ecNumber>
    </recommendedName>
    <alternativeName>
        <fullName evidence="1">Lip-syn</fullName>
        <shortName evidence="1">LS</shortName>
    </alternativeName>
    <alternativeName>
        <fullName evidence="1">Lipoate synthase</fullName>
    </alternativeName>
    <alternativeName>
        <fullName evidence="1">Lipoic acid synthase</fullName>
    </alternativeName>
    <alternativeName>
        <fullName evidence="1">Sulfur insertion protein LipA</fullName>
    </alternativeName>
</protein>
<proteinExistence type="inferred from homology"/>
<organism>
    <name type="scientific">Francisella tularensis subsp. holarctica (strain LVS)</name>
    <dbReference type="NCBI Taxonomy" id="376619"/>
    <lineage>
        <taxon>Bacteria</taxon>
        <taxon>Pseudomonadati</taxon>
        <taxon>Pseudomonadota</taxon>
        <taxon>Gammaproteobacteria</taxon>
        <taxon>Thiotrichales</taxon>
        <taxon>Francisellaceae</taxon>
        <taxon>Francisella</taxon>
    </lineage>
</organism>
<comment type="function">
    <text evidence="1">Catalyzes the radical-mediated insertion of two sulfur atoms into the C-6 and C-8 positions of the octanoyl moiety bound to the lipoyl domains of lipoate-dependent enzymes, thereby converting the octanoylated domains into lipoylated derivatives.</text>
</comment>
<comment type="catalytic activity">
    <reaction evidence="1">
        <text>[[Fe-S] cluster scaffold protein carrying a second [4Fe-4S](2+) cluster] + N(6)-octanoyl-L-lysyl-[protein] + 2 oxidized [2Fe-2S]-[ferredoxin] + 2 S-adenosyl-L-methionine + 4 H(+) = [[Fe-S] cluster scaffold protein] + N(6)-[(R)-dihydrolipoyl]-L-lysyl-[protein] + 4 Fe(3+) + 2 hydrogen sulfide + 2 5'-deoxyadenosine + 2 L-methionine + 2 reduced [2Fe-2S]-[ferredoxin]</text>
        <dbReference type="Rhea" id="RHEA:16585"/>
        <dbReference type="Rhea" id="RHEA-COMP:9928"/>
        <dbReference type="Rhea" id="RHEA-COMP:10000"/>
        <dbReference type="Rhea" id="RHEA-COMP:10001"/>
        <dbReference type="Rhea" id="RHEA-COMP:10475"/>
        <dbReference type="Rhea" id="RHEA-COMP:14568"/>
        <dbReference type="Rhea" id="RHEA-COMP:14569"/>
        <dbReference type="ChEBI" id="CHEBI:15378"/>
        <dbReference type="ChEBI" id="CHEBI:17319"/>
        <dbReference type="ChEBI" id="CHEBI:29034"/>
        <dbReference type="ChEBI" id="CHEBI:29919"/>
        <dbReference type="ChEBI" id="CHEBI:33722"/>
        <dbReference type="ChEBI" id="CHEBI:33737"/>
        <dbReference type="ChEBI" id="CHEBI:33738"/>
        <dbReference type="ChEBI" id="CHEBI:57844"/>
        <dbReference type="ChEBI" id="CHEBI:59789"/>
        <dbReference type="ChEBI" id="CHEBI:78809"/>
        <dbReference type="ChEBI" id="CHEBI:83100"/>
        <dbReference type="EC" id="2.8.1.8"/>
    </reaction>
</comment>
<comment type="cofactor">
    <cofactor evidence="1">
        <name>[4Fe-4S] cluster</name>
        <dbReference type="ChEBI" id="CHEBI:49883"/>
    </cofactor>
    <text evidence="1">Binds 2 [4Fe-4S] clusters per subunit. One cluster is coordinated with 3 cysteines and an exchangeable S-adenosyl-L-methionine.</text>
</comment>
<comment type="pathway">
    <text evidence="1">Protein modification; protein lipoylation via endogenous pathway; protein N(6)-(lipoyl)lysine from octanoyl-[acyl-carrier-protein]: step 2/2.</text>
</comment>
<comment type="subcellular location">
    <subcellularLocation>
        <location evidence="1">Cytoplasm</location>
    </subcellularLocation>
</comment>
<comment type="similarity">
    <text evidence="1">Belongs to the radical SAM superfamily. Lipoyl synthase family.</text>
</comment>
<reference key="1">
    <citation type="submission" date="2006-03" db="EMBL/GenBank/DDBJ databases">
        <title>Complete genome sequence of Francisella tularensis LVS (Live Vaccine Strain).</title>
        <authorList>
            <person name="Chain P."/>
            <person name="Larimer F."/>
            <person name="Land M."/>
            <person name="Stilwagen S."/>
            <person name="Larsson P."/>
            <person name="Bearden S."/>
            <person name="Chu M."/>
            <person name="Oyston P."/>
            <person name="Forsman M."/>
            <person name="Andersson S."/>
            <person name="Lindler L."/>
            <person name="Titball R."/>
            <person name="Garcia E."/>
        </authorList>
    </citation>
    <scope>NUCLEOTIDE SEQUENCE [LARGE SCALE GENOMIC DNA]</scope>
    <source>
        <strain>LVS</strain>
    </source>
</reference>
<evidence type="ECO:0000255" key="1">
    <source>
        <dbReference type="HAMAP-Rule" id="MF_00206"/>
    </source>
</evidence>
<evidence type="ECO:0000255" key="2">
    <source>
        <dbReference type="PROSITE-ProRule" id="PRU01266"/>
    </source>
</evidence>
<dbReference type="EC" id="2.8.1.8" evidence="1"/>
<dbReference type="EMBL" id="AM233362">
    <property type="protein sequence ID" value="CAJ79366.1"/>
    <property type="molecule type" value="Genomic_DNA"/>
</dbReference>
<dbReference type="RefSeq" id="WP_003015696.1">
    <property type="nucleotide sequence ID" value="NZ_CP009694.1"/>
</dbReference>
<dbReference type="SMR" id="Q2A3R2"/>
<dbReference type="KEGG" id="ftl:FTL_0927"/>
<dbReference type="UniPathway" id="UPA00538">
    <property type="reaction ID" value="UER00593"/>
</dbReference>
<dbReference type="Proteomes" id="UP000001944">
    <property type="component" value="Chromosome"/>
</dbReference>
<dbReference type="GO" id="GO:0005737">
    <property type="term" value="C:cytoplasm"/>
    <property type="evidence" value="ECO:0007669"/>
    <property type="project" value="UniProtKB-SubCell"/>
</dbReference>
<dbReference type="GO" id="GO:0051539">
    <property type="term" value="F:4 iron, 4 sulfur cluster binding"/>
    <property type="evidence" value="ECO:0007669"/>
    <property type="project" value="UniProtKB-UniRule"/>
</dbReference>
<dbReference type="GO" id="GO:0016992">
    <property type="term" value="F:lipoate synthase activity"/>
    <property type="evidence" value="ECO:0007669"/>
    <property type="project" value="UniProtKB-UniRule"/>
</dbReference>
<dbReference type="GO" id="GO:0046872">
    <property type="term" value="F:metal ion binding"/>
    <property type="evidence" value="ECO:0007669"/>
    <property type="project" value="UniProtKB-KW"/>
</dbReference>
<dbReference type="FunFam" id="3.20.20.70:FF:000040">
    <property type="entry name" value="Lipoyl synthase"/>
    <property type="match status" value="1"/>
</dbReference>
<dbReference type="Gene3D" id="3.20.20.70">
    <property type="entry name" value="Aldolase class I"/>
    <property type="match status" value="1"/>
</dbReference>
<dbReference type="HAMAP" id="MF_00206">
    <property type="entry name" value="Lipoyl_synth"/>
    <property type="match status" value="1"/>
</dbReference>
<dbReference type="InterPro" id="IPR013785">
    <property type="entry name" value="Aldolase_TIM"/>
</dbReference>
<dbReference type="InterPro" id="IPR006638">
    <property type="entry name" value="Elp3/MiaA/NifB-like_rSAM"/>
</dbReference>
<dbReference type="InterPro" id="IPR031691">
    <property type="entry name" value="LIAS_N"/>
</dbReference>
<dbReference type="InterPro" id="IPR003698">
    <property type="entry name" value="Lipoyl_synth"/>
</dbReference>
<dbReference type="InterPro" id="IPR007197">
    <property type="entry name" value="rSAM"/>
</dbReference>
<dbReference type="NCBIfam" id="TIGR00510">
    <property type="entry name" value="lipA"/>
    <property type="match status" value="1"/>
</dbReference>
<dbReference type="NCBIfam" id="NF004019">
    <property type="entry name" value="PRK05481.1"/>
    <property type="match status" value="1"/>
</dbReference>
<dbReference type="NCBIfam" id="NF009544">
    <property type="entry name" value="PRK12928.1"/>
    <property type="match status" value="1"/>
</dbReference>
<dbReference type="PANTHER" id="PTHR10949">
    <property type="entry name" value="LIPOYL SYNTHASE"/>
    <property type="match status" value="1"/>
</dbReference>
<dbReference type="PANTHER" id="PTHR10949:SF0">
    <property type="entry name" value="LIPOYL SYNTHASE, MITOCHONDRIAL"/>
    <property type="match status" value="1"/>
</dbReference>
<dbReference type="Pfam" id="PF16881">
    <property type="entry name" value="LIAS_N"/>
    <property type="match status" value="1"/>
</dbReference>
<dbReference type="Pfam" id="PF04055">
    <property type="entry name" value="Radical_SAM"/>
    <property type="match status" value="1"/>
</dbReference>
<dbReference type="PIRSF" id="PIRSF005963">
    <property type="entry name" value="Lipoyl_synth"/>
    <property type="match status" value="1"/>
</dbReference>
<dbReference type="SFLD" id="SFLDF00271">
    <property type="entry name" value="lipoyl_synthase"/>
    <property type="match status" value="1"/>
</dbReference>
<dbReference type="SFLD" id="SFLDG01058">
    <property type="entry name" value="lipoyl_synthase_like"/>
    <property type="match status" value="1"/>
</dbReference>
<dbReference type="SMART" id="SM00729">
    <property type="entry name" value="Elp3"/>
    <property type="match status" value="1"/>
</dbReference>
<dbReference type="SUPFAM" id="SSF102114">
    <property type="entry name" value="Radical SAM enzymes"/>
    <property type="match status" value="1"/>
</dbReference>
<dbReference type="PROSITE" id="PS51918">
    <property type="entry name" value="RADICAL_SAM"/>
    <property type="match status" value="1"/>
</dbReference>
<gene>
    <name evidence="1" type="primary">lipA</name>
    <name type="ordered locus">FTL_0927</name>
</gene>
<accession>Q2A3R2</accession>
<sequence length="327" mass="36866">MKEISGIKVKVESGSKYTTDHGFYAVKDGIRNKKENAVHVRKPDWLKVQKQDSKEYLKVKSITKKHKLSTVCEEARCPNINECWSHGTATIMLMGSVCTRACKFCSVDTGNPKGWLDKDEPMNAAESVKLMGLEYVVLTSVDRDDLEDGGAGHYAATITAIKNLDENIKVEALTPDFAGINENIDKIINTKVDVIAQNIETVERLTHPVRDPRAGYWQTLNFLKYVKQKSPNVLTKTSIMVGLGETDEEIYKTMDDARSVGVDIITLGQYMQPTKHHLSVERFVTPQQFEEYRKVGLEKGFLEVASGPMVRSSYRADRVFKRNNLDL</sequence>
<name>LIPA_FRATH</name>